<keyword id="KW-0963">Cytoplasm</keyword>
<keyword id="KW-0206">Cytoskeleton</keyword>
<keyword id="KW-0903">Direct protein sequencing</keyword>
<keyword id="KW-0325">Glycoprotein</keyword>
<keyword id="KW-0488">Methylation</keyword>
<keyword id="KW-0493">Microtubule</keyword>
<feature type="chain" id="PRO_0000205711" description="Kinetoplastid membrane protein 11">
    <location>
        <begin position="1"/>
        <end position="92"/>
    </location>
</feature>
<feature type="modified residue" description="Omega-N-methylarginine" evidence="3">
    <location>
        <position position="45"/>
    </location>
</feature>
<feature type="sequence conflict" description="In Ref. 2; AA sequence." evidence="6" ref="2">
    <original>Q</original>
    <variation>E</variation>
    <location>
        <position position="17"/>
    </location>
</feature>
<name>KM11_LEIDO</name>
<dbReference type="EMBL" id="S77039">
    <property type="protein sequence ID" value="AAB33127.2"/>
    <property type="molecule type" value="Genomic_DNA"/>
</dbReference>
<dbReference type="PIR" id="S53443">
    <property type="entry name" value="S53443"/>
</dbReference>
<dbReference type="SMR" id="Q36736"/>
<dbReference type="iPTMnet" id="Q36736"/>
<dbReference type="VEuPathDB" id="TriTrypDB:LdBPK_352260.1"/>
<dbReference type="VEuPathDB" id="TriTrypDB:LdCL_350027500"/>
<dbReference type="VEuPathDB" id="TriTrypDB:LDHU3_35.2890"/>
<dbReference type="GO" id="GO:0005737">
    <property type="term" value="C:cytoplasm"/>
    <property type="evidence" value="ECO:0007669"/>
    <property type="project" value="UniProtKB-KW"/>
</dbReference>
<dbReference type="GO" id="GO:0005874">
    <property type="term" value="C:microtubule"/>
    <property type="evidence" value="ECO:0007669"/>
    <property type="project" value="UniProtKB-KW"/>
</dbReference>
<dbReference type="GO" id="GO:0015630">
    <property type="term" value="C:microtubule cytoskeleton"/>
    <property type="evidence" value="ECO:0000250"/>
    <property type="project" value="UniProtKB"/>
</dbReference>
<dbReference type="GO" id="GO:0007010">
    <property type="term" value="P:cytoskeleton organization"/>
    <property type="evidence" value="ECO:0000250"/>
    <property type="project" value="UniProtKB"/>
</dbReference>
<dbReference type="GO" id="GO:0006952">
    <property type="term" value="P:defense response"/>
    <property type="evidence" value="ECO:0007669"/>
    <property type="project" value="InterPro"/>
</dbReference>
<dbReference type="GO" id="GO:0008284">
    <property type="term" value="P:positive regulation of cell population proliferation"/>
    <property type="evidence" value="ECO:0007669"/>
    <property type="project" value="InterPro"/>
</dbReference>
<dbReference type="Gene3D" id="1.20.120.20">
    <property type="entry name" value="Apolipoprotein"/>
    <property type="match status" value="1"/>
</dbReference>
<dbReference type="InterPro" id="IPR004132">
    <property type="entry name" value="KMP11"/>
</dbReference>
<dbReference type="Pfam" id="PF03037">
    <property type="entry name" value="KMP11"/>
    <property type="match status" value="1"/>
</dbReference>
<accession>Q36736</accession>
<proteinExistence type="evidence at protein level"/>
<gene>
    <name type="primary">KMP-11</name>
</gene>
<reference key="1">
    <citation type="journal article" date="1995" name="Biochem. J.">
        <title>Cloning and structure-function analysis of the Leishmania donovani kinetoplastid membrane protein-11.</title>
        <authorList>
            <person name="Jardim A."/>
            <person name="Hanson S."/>
            <person name="Ullman B."/>
            <person name="McCubbin W.D."/>
            <person name="Kay C.M."/>
            <person name="Olafson R.W."/>
        </authorList>
    </citation>
    <scope>NUCLEOTIDE SEQUENCE [GENOMIC DNA]</scope>
    <source>
        <strain>Ld3</strain>
    </source>
</reference>
<reference evidence="6" key="2">
    <citation type="journal article" date="1995" name="Biochem. J.">
        <title>Isolation and structural characterization of the Leishmania donovani kinetoplastid membrane protein-11, a major immunoreactive membrane glycoprotein.</title>
        <authorList>
            <person name="Jardim A."/>
            <person name="Funk V."/>
            <person name="Caprioli R.M."/>
            <person name="Olafson R.W."/>
        </authorList>
    </citation>
    <scope>PROTEIN SEQUENCE OF 12-27 AND 30-92</scope>
    <scope>GLYCOSYLATION</scope>
    <scope>METHYLATION AT ARG-45</scope>
    <scope>DEVELOPMENTAL STAGE</scope>
    <source>
        <strain>Ld3</strain>
    </source>
</reference>
<reference key="3">
    <citation type="journal article" date="1991" name="J. Immunol.">
        <title>The Leishmania donovani lipophosphoglycan T lymphocyte-reactive component is a tightly associated protein complex.</title>
        <authorList>
            <person name="Jardim A."/>
            <person name="Tolson D.L."/>
            <person name="Turco S.J."/>
            <person name="Pearson T.W."/>
            <person name="Olafson R.W."/>
        </authorList>
    </citation>
    <scope>CHARACTERIZATION</scope>
    <source>
        <strain>Ld3</strain>
    </source>
</reference>
<reference evidence="6" key="4">
    <citation type="journal article" date="1994" name="Infect. Immun.">
        <title>The kinetoplastid membrane protein 11 of Leishmania donovani and African trypanosomes is a potent stimulator of T-lymphocyte proliferation.</title>
        <authorList>
            <person name="Tolson D.L."/>
            <person name="Jardim A."/>
            <person name="Schnur L.F."/>
            <person name="Stebeck C."/>
            <person name="Tuckey C."/>
            <person name="Beecroft R.P."/>
            <person name="Teh H.-S."/>
            <person name="Olafson R.W."/>
            <person name="Pearson T.W."/>
        </authorList>
    </citation>
    <scope>FUNCTION</scope>
    <scope>DEVELOPMENTAL STAGE</scope>
</reference>
<reference evidence="6" key="5">
    <citation type="journal article" date="1995" name="Mol. Biochem. Parasitol.">
        <title>Kinetoplastid membrane protein-11 (KMP-11) is differentially expressed during the life cycle of African trypanosomes and is found in a wide variety of kinetoplastid parasites.</title>
        <authorList>
            <person name="Stebeck C.E."/>
            <person name="Beecroft R.P."/>
            <person name="Singh B.N."/>
            <person name="Jardim A."/>
            <person name="Olafson R.W."/>
            <person name="Tuckey C."/>
            <person name="Prenevost K.D."/>
            <person name="Pearson T.W."/>
        </authorList>
    </citation>
    <scope>SUBCELLULAR LOCATION</scope>
</reference>
<reference evidence="6" key="6">
    <citation type="journal article" date="1998" name="J. Parasitol.">
        <title>Reduced expression of lipophosphoglycan (LPG) and kinetoplastid membrane protein (KMP)-11 in Leishmania donovani promastigotes in axenic culture.</title>
        <authorList>
            <person name="Mukhopadhyay S."/>
            <person name="Sen P."/>
            <person name="Majumder H.K."/>
            <person name="Roy S."/>
        </authorList>
    </citation>
    <scope>FUNCTION</scope>
    <source>
        <strain>AG83</strain>
    </source>
</reference>
<protein>
    <recommendedName>
        <fullName>Kinetoplastid membrane protein 11</fullName>
        <shortName>KMP-11</shortName>
    </recommendedName>
    <alternativeName>
        <fullName>Lipophosphoglycan-associated protein</fullName>
        <shortName>LPGAP</shortName>
    </alternativeName>
</protein>
<comment type="function">
    <text evidence="4 5">May be involved in the regulation of the cytoskeleton through interaction with the subpellicular microtubules. May be involved in parasite mobility and attachment to the surface of the host cell. Strongly stimulates T-cell proliferation and is thought to play a role in the immunology of leishmaniasis.</text>
</comment>
<comment type="subunit">
    <text evidence="1">Monomer.</text>
</comment>
<comment type="subcellular location">
    <subcellularLocation>
        <location evidence="2">Cytoplasm</location>
        <location evidence="2">Cytoskeleton</location>
    </subcellularLocation>
    <text>Associated with microtubules.</text>
</comment>
<comment type="developmental stage">
    <text evidence="3 4">Present in both promastigotes and amastigotes.</text>
</comment>
<comment type="PTM">
    <text evidence="3">A minor in vivo processed fragment (IVP) also exists, probably as a result of proteolysis.</text>
</comment>
<comment type="PTM">
    <text evidence="3">Probably O-glycosylated. Contains equimolar amounts of galactosamine, galactose, glucose and mannose.</text>
</comment>
<comment type="PTM">
    <text evidence="3">The N-terminus is blocked.</text>
</comment>
<comment type="similarity">
    <text evidence="6">Belongs to the KMP-11 family.</text>
</comment>
<evidence type="ECO:0000250" key="1">
    <source>
        <dbReference type="UniProtKB" id="Q25297"/>
    </source>
</evidence>
<evidence type="ECO:0000269" key="2">
    <source>
    </source>
</evidence>
<evidence type="ECO:0000269" key="3">
    <source>
    </source>
</evidence>
<evidence type="ECO:0000269" key="4">
    <source>
    </source>
</evidence>
<evidence type="ECO:0000269" key="5">
    <source>
    </source>
</evidence>
<evidence type="ECO:0000305" key="6"/>
<sequence length="92" mass="11262">MATTYEEFSAKLDRLDQEFNRKMQEQNAKFFADKPDESTLSPEMREHYEKFERMIKEHTEKFNKKMHEHSEHFKQKFAELLEQQKAAQYPSK</sequence>
<organism>
    <name type="scientific">Leishmania donovani</name>
    <dbReference type="NCBI Taxonomy" id="5661"/>
    <lineage>
        <taxon>Eukaryota</taxon>
        <taxon>Discoba</taxon>
        <taxon>Euglenozoa</taxon>
        <taxon>Kinetoplastea</taxon>
        <taxon>Metakinetoplastina</taxon>
        <taxon>Trypanosomatida</taxon>
        <taxon>Trypanosomatidae</taxon>
        <taxon>Leishmaniinae</taxon>
        <taxon>Leishmania</taxon>
    </lineage>
</organism>